<dbReference type="EMBL" id="CP001252">
    <property type="protein sequence ID" value="ACK47032.1"/>
    <property type="molecule type" value="Genomic_DNA"/>
</dbReference>
<dbReference type="RefSeq" id="WP_012587888.1">
    <property type="nucleotide sequence ID" value="NC_011663.1"/>
</dbReference>
<dbReference type="SMR" id="B8EAK3"/>
<dbReference type="KEGG" id="sbp:Sbal223_2538"/>
<dbReference type="HOGENOM" id="CLU_047123_0_0_6"/>
<dbReference type="Proteomes" id="UP000002507">
    <property type="component" value="Chromosome"/>
</dbReference>
<dbReference type="GO" id="GO:0042597">
    <property type="term" value="C:periplasmic space"/>
    <property type="evidence" value="ECO:0007669"/>
    <property type="project" value="UniProtKB-SubCell"/>
</dbReference>
<dbReference type="GO" id="GO:0051301">
    <property type="term" value="P:cell division"/>
    <property type="evidence" value="ECO:0007669"/>
    <property type="project" value="UniProtKB-UniRule"/>
</dbReference>
<dbReference type="GO" id="GO:0017038">
    <property type="term" value="P:protein import"/>
    <property type="evidence" value="ECO:0007669"/>
    <property type="project" value="InterPro"/>
</dbReference>
<dbReference type="Gene3D" id="2.120.10.30">
    <property type="entry name" value="TolB, C-terminal domain"/>
    <property type="match status" value="1"/>
</dbReference>
<dbReference type="Gene3D" id="3.40.50.10070">
    <property type="entry name" value="TolB, N-terminal domain"/>
    <property type="match status" value="1"/>
</dbReference>
<dbReference type="HAMAP" id="MF_00671">
    <property type="entry name" value="TolB"/>
    <property type="match status" value="1"/>
</dbReference>
<dbReference type="InterPro" id="IPR011042">
    <property type="entry name" value="6-blade_b-propeller_TolB-like"/>
</dbReference>
<dbReference type="InterPro" id="IPR011659">
    <property type="entry name" value="PD40"/>
</dbReference>
<dbReference type="InterPro" id="IPR014167">
    <property type="entry name" value="Tol-Pal_TolB"/>
</dbReference>
<dbReference type="InterPro" id="IPR007195">
    <property type="entry name" value="TolB_N"/>
</dbReference>
<dbReference type="NCBIfam" id="TIGR02800">
    <property type="entry name" value="propeller_TolB"/>
    <property type="match status" value="1"/>
</dbReference>
<dbReference type="PANTHER" id="PTHR36842:SF1">
    <property type="entry name" value="PROTEIN TOLB"/>
    <property type="match status" value="1"/>
</dbReference>
<dbReference type="PANTHER" id="PTHR36842">
    <property type="entry name" value="PROTEIN TOLB HOMOLOG"/>
    <property type="match status" value="1"/>
</dbReference>
<dbReference type="Pfam" id="PF07676">
    <property type="entry name" value="PD40"/>
    <property type="match status" value="4"/>
</dbReference>
<dbReference type="Pfam" id="PF04052">
    <property type="entry name" value="TolB_N"/>
    <property type="match status" value="1"/>
</dbReference>
<dbReference type="SUPFAM" id="SSF52964">
    <property type="entry name" value="TolB, N-terminal domain"/>
    <property type="match status" value="1"/>
</dbReference>
<dbReference type="SUPFAM" id="SSF69304">
    <property type="entry name" value="Tricorn protease N-terminal domain"/>
    <property type="match status" value="1"/>
</dbReference>
<protein>
    <recommendedName>
        <fullName evidence="1">Tol-Pal system protein TolB</fullName>
    </recommendedName>
</protein>
<accession>B8EAK3</accession>
<organism>
    <name type="scientific">Shewanella baltica (strain OS223)</name>
    <dbReference type="NCBI Taxonomy" id="407976"/>
    <lineage>
        <taxon>Bacteria</taxon>
        <taxon>Pseudomonadati</taxon>
        <taxon>Pseudomonadota</taxon>
        <taxon>Gammaproteobacteria</taxon>
        <taxon>Alteromonadales</taxon>
        <taxon>Shewanellaceae</taxon>
        <taxon>Shewanella</taxon>
    </lineage>
</organism>
<gene>
    <name evidence="1" type="primary">tolB</name>
    <name type="ordered locus">Sbal223_2538</name>
</gene>
<reference key="1">
    <citation type="submission" date="2008-12" db="EMBL/GenBank/DDBJ databases">
        <title>Complete sequence of chromosome of Shewanella baltica OS223.</title>
        <authorList>
            <consortium name="US DOE Joint Genome Institute"/>
            <person name="Lucas S."/>
            <person name="Copeland A."/>
            <person name="Lapidus A."/>
            <person name="Glavina del Rio T."/>
            <person name="Dalin E."/>
            <person name="Tice H."/>
            <person name="Bruce D."/>
            <person name="Goodwin L."/>
            <person name="Pitluck S."/>
            <person name="Chertkov O."/>
            <person name="Meincke L."/>
            <person name="Brettin T."/>
            <person name="Detter J.C."/>
            <person name="Han C."/>
            <person name="Kuske C.R."/>
            <person name="Larimer F."/>
            <person name="Land M."/>
            <person name="Hauser L."/>
            <person name="Kyrpides N."/>
            <person name="Ovchinnikova G."/>
            <person name="Brettar I."/>
            <person name="Rodrigues J."/>
            <person name="Konstantinidis K."/>
            <person name="Tiedje J."/>
        </authorList>
    </citation>
    <scope>NUCLEOTIDE SEQUENCE [LARGE SCALE GENOMIC DNA]</scope>
    <source>
        <strain>OS223</strain>
    </source>
</reference>
<proteinExistence type="inferred from homology"/>
<sequence>MRILAKWLALAVLLCTTPAKAALDIVITEGVDAARPIAVMPFVWQGPGAAPQAIADVVMSDLVRSGTFKPLDELGLPQRNIGTAAQFQANSWSSVGAEALVLGTVKPYGTDQYLVSFDLIDLVKAQNQALKGPVSATEFLMDSRQTVISAAQFRQYGHRISDIVYEKLTGIRGAFLTRISYVVVNHTQKAPYQLMVADYDGVNEQMLLRSPEPLMSPTWSPDGRRLAYVSFENKKAEIFVQDLYTQVRTKVSSFPGINGAPAFSPDGKSLAITLSKDGQPEIYIIDIATKAIKRITNHYAIDTEPSWYPDGKSLIFTSERGGRPQIYRVELSSGKVSRETFEGEWNLGGSITPDGRSMIFVNRTNGKFNIARMDLSTRFMQVLTSTRLDESPSVAPNGTMVIYGTTYQGKQVLAAVSTDGRFKARLPAGQGEVKSPSWSPFL</sequence>
<name>TOLB_SHEB2</name>
<comment type="function">
    <text evidence="1">Part of the Tol-Pal system, which plays a role in outer membrane invagination during cell division and is important for maintaining outer membrane integrity.</text>
</comment>
<comment type="subunit">
    <text evidence="1">The Tol-Pal system is composed of five core proteins: the inner membrane proteins TolA, TolQ and TolR, the periplasmic protein TolB and the outer membrane protein Pal. They form a network linking the inner and outer membranes and the peptidoglycan layer.</text>
</comment>
<comment type="subcellular location">
    <subcellularLocation>
        <location evidence="1">Periplasm</location>
    </subcellularLocation>
</comment>
<comment type="similarity">
    <text evidence="1">Belongs to the TolB family.</text>
</comment>
<evidence type="ECO:0000255" key="1">
    <source>
        <dbReference type="HAMAP-Rule" id="MF_00671"/>
    </source>
</evidence>
<feature type="signal peptide" evidence="1">
    <location>
        <begin position="1"/>
        <end position="21"/>
    </location>
</feature>
<feature type="chain" id="PRO_5000424042" description="Tol-Pal system protein TolB" evidence="1">
    <location>
        <begin position="22"/>
        <end position="442"/>
    </location>
</feature>
<keyword id="KW-0131">Cell cycle</keyword>
<keyword id="KW-0132">Cell division</keyword>
<keyword id="KW-0574">Periplasm</keyword>
<keyword id="KW-0732">Signal</keyword>